<feature type="chain" id="PRO_0000372923" description="Matrix protein 2">
    <location>
        <begin position="1"/>
        <end position="97"/>
    </location>
</feature>
<feature type="topological domain" description="Virion surface" evidence="1">
    <location>
        <begin position="1"/>
        <end position="22"/>
    </location>
</feature>
<feature type="transmembrane region" description="Helical; Signal-anchor for type III membrane protein" evidence="1">
    <location>
        <begin position="23"/>
        <end position="43"/>
    </location>
</feature>
<feature type="topological domain" description="Intravirion" evidence="1">
    <location>
        <begin position="44"/>
        <end position="97"/>
    </location>
</feature>
<feature type="region of interest" description="Disordered" evidence="2">
    <location>
        <begin position="59"/>
        <end position="85"/>
    </location>
</feature>
<feature type="compositionally biased region" description="Basic and acidic residues" evidence="2">
    <location>
        <begin position="71"/>
        <end position="80"/>
    </location>
</feature>
<feature type="site" description="Essential for channel activity, possibly by being protonated during channel activation, and by forming the channel gate and the selective filter" evidence="1">
    <location>
        <position position="37"/>
    </location>
</feature>
<feature type="site" description="Seems to be involved in pH gating" evidence="1">
    <location>
        <position position="41"/>
    </location>
</feature>
<feature type="modified residue" description="Phosphoserine; by host" evidence="1">
    <location>
        <position position="64"/>
    </location>
</feature>
<feature type="modified residue" description="Phosphoserine; by host" evidence="1">
    <location>
        <position position="82"/>
    </location>
</feature>
<feature type="lipid moiety-binding region" description="S-palmitoyl cysteine; by host" evidence="1">
    <location>
        <position position="50"/>
    </location>
</feature>
<feature type="glycosylation site" description="N-linked (GlcNAc...) asparagine; by host" evidence="1">
    <location>
        <position position="20"/>
    </location>
</feature>
<feature type="disulfide bond" description="Interchain (with C-17)" evidence="1">
    <location>
        <position position="17"/>
    </location>
</feature>
<feature type="disulfide bond" description="Interchain (with C-19)" evidence="1">
    <location>
        <position position="19"/>
    </location>
</feature>
<reference key="1">
    <citation type="submission" date="2007-04" db="EMBL/GenBank/DDBJ databases">
        <title>The NIAID influenza genome sequencing project.</title>
        <authorList>
            <person name="Spiro D."/>
            <person name="Sengamalay N."/>
            <person name="Boyne A."/>
            <person name="Bera J."/>
            <person name="Ghedin E."/>
            <person name="Zaborsky J."/>
            <person name="Subbu V."/>
            <person name="Sparenborg J."/>
            <person name="Gallagher T."/>
            <person name="Overton L."/>
            <person name="Althoff R."/>
            <person name="Liu X."/>
            <person name="Sitz J."/>
            <person name="Katzel D."/>
            <person name="Neupane R."/>
            <person name="Shumway M."/>
            <person name="Koo H."/>
            <person name="Griesemer S."/>
            <person name="StGeorge K."/>
            <person name="Bennett R."/>
            <person name="Taylor J."/>
            <person name="Bao Y."/>
            <person name="Bolotov P."/>
            <person name="Dernovoy D."/>
            <person name="Kiryutin B."/>
            <person name="Lipman D.J."/>
            <person name="Tatusova T."/>
        </authorList>
    </citation>
    <scope>NUCLEOTIDE SEQUENCE [GENOMIC RNA]</scope>
</reference>
<reference key="2">
    <citation type="submission" date="2007-04" db="EMBL/GenBank/DDBJ databases">
        <authorList>
            <consortium name="The NIAID Influenza Genome Sequencing Consortium"/>
        </authorList>
    </citation>
    <scope>NUCLEOTIDE SEQUENCE [GENOMIC RNA]</scope>
</reference>
<proteinExistence type="inferred from homology"/>
<organism>
    <name type="scientific">Influenza A virus (strain A/USA:Albany/12/1951 H1N1)</name>
    <dbReference type="NCBI Taxonomy" id="425580"/>
    <lineage>
        <taxon>Viruses</taxon>
        <taxon>Riboviria</taxon>
        <taxon>Orthornavirae</taxon>
        <taxon>Negarnaviricota</taxon>
        <taxon>Polyploviricotina</taxon>
        <taxon>Insthoviricetes</taxon>
        <taxon>Articulavirales</taxon>
        <taxon>Orthomyxoviridae</taxon>
        <taxon>Alphainfluenzavirus</taxon>
        <taxon>Alphainfluenzavirus influenzae</taxon>
        <taxon>Influenza A virus</taxon>
    </lineage>
</organism>
<name>M2_I51A0</name>
<sequence length="97" mass="11178">MSLLTEVETPIRNEWGCRCNDSSDPLVVAASIIGILHLILWILDRLFFKCIYRLFKHGLKRGPSTEGVPESMREEYRKEQQSAVDADDSHFVNIELE</sequence>
<keyword id="KW-0025">Alternative splicing</keyword>
<keyword id="KW-1015">Disulfide bond</keyword>
<keyword id="KW-0325">Glycoprotein</keyword>
<keyword id="KW-1032">Host cell membrane</keyword>
<keyword id="KW-1043">Host membrane</keyword>
<keyword id="KW-0945">Host-virus interaction</keyword>
<keyword id="KW-0375">Hydrogen ion transport</keyword>
<keyword id="KW-1083">Inhibition of host autophagy by virus</keyword>
<keyword id="KW-0407">Ion channel</keyword>
<keyword id="KW-0406">Ion transport</keyword>
<keyword id="KW-0449">Lipoprotein</keyword>
<keyword id="KW-0472">Membrane</keyword>
<keyword id="KW-0564">Palmitate</keyword>
<keyword id="KW-0597">Phosphoprotein</keyword>
<keyword id="KW-0735">Signal-anchor</keyword>
<keyword id="KW-0812">Transmembrane</keyword>
<keyword id="KW-1133">Transmembrane helix</keyword>
<keyword id="KW-0813">Transport</keyword>
<keyword id="KW-1182">Viral ion channel</keyword>
<keyword id="KW-0946">Virion</keyword>
<evidence type="ECO:0000255" key="1">
    <source>
        <dbReference type="HAMAP-Rule" id="MF_04069"/>
    </source>
</evidence>
<evidence type="ECO:0000256" key="2">
    <source>
        <dbReference type="SAM" id="MobiDB-lite"/>
    </source>
</evidence>
<accession>A4U7A7</accession>
<organismHost>
    <name type="scientific">Aves</name>
    <dbReference type="NCBI Taxonomy" id="8782"/>
</organismHost>
<organismHost>
    <name type="scientific">Homo sapiens</name>
    <name type="common">Human</name>
    <dbReference type="NCBI Taxonomy" id="9606"/>
</organismHost>
<organismHost>
    <name type="scientific">Sus scrofa</name>
    <name type="common">Pig</name>
    <dbReference type="NCBI Taxonomy" id="9823"/>
</organismHost>
<comment type="function">
    <text evidence="1">Forms a proton-selective ion channel that is necessary for the efficient release of the viral genome during virus entry. After attaching to the cell surface, the virion enters the cell by endocytosis. Acidification of the endosome triggers M2 ion channel activity. The influx of protons into virion interior is believed to disrupt interactions between the viral ribonucleoprotein (RNP), matrix protein 1 (M1), and lipid bilayers, thereby freeing the viral genome from interaction with viral proteins and enabling RNA segments to migrate to the host cell nucleus, where influenza virus RNA transcription and replication occur. Also plays a role in viral proteins secretory pathway. Elevates the intravesicular pH of normally acidic compartments, such as trans-Golgi network, preventing newly formed hemagglutinin from premature switching to the fusion-active conformation.</text>
</comment>
<comment type="activity regulation">
    <text>The M2 protein from most influenza A strains is inhibited by amantadine and rimantadine, resulting in viral uncoating incapacity. Emergence of amantadine-resistant variants is usually rapid.</text>
</comment>
<comment type="subunit">
    <text evidence="1">Homotetramer; composed of two disulfide-linked dimers held together by non-covalent interactions. May interact with matrix protein 1.</text>
</comment>
<comment type="subcellular location">
    <subcellularLocation>
        <location evidence="1">Virion membrane</location>
    </subcellularLocation>
    <subcellularLocation>
        <location evidence="1">Host apical cell membrane</location>
        <topology evidence="1">Single-pass type III membrane protein</topology>
    </subcellularLocation>
    <text evidence="1">Abundantly expressed at the apical plasma membrane in infected polarized epithelial cells, in close proximity to budding and assembled virions. Minor component of virions (only 16-20 molecules/virion).</text>
</comment>
<comment type="alternative products">
    <event type="alternative splicing"/>
    <isoform>
        <id>A4U7A7-1</id>
        <name>M2</name>
        <sequence type="displayed"/>
    </isoform>
    <isoform>
        <id>A4U7A8-1</id>
        <name>M1</name>
        <sequence type="external"/>
    </isoform>
    <text>Only the first 9 residues are shared by the 2 isoforms.</text>
</comment>
<comment type="domain">
    <text evidence="1">Cytoplasmic tail plays an important role in virion assembly and morphogenesis.</text>
</comment>
<comment type="miscellaneous">
    <text evidence="1">When the channel is activated, one or more imidazole moieties of His-37 probably become bi-protonated.</text>
</comment>
<comment type="similarity">
    <text evidence="1">Belongs to the influenza viruses matrix protein M2 family.</text>
</comment>
<dbReference type="EMBL" id="CY021822">
    <property type="protein sequence ID" value="ABP49483.1"/>
    <property type="molecule type" value="Viral_cRNA"/>
</dbReference>
<dbReference type="BMRB" id="A4U7A7"/>
<dbReference type="SMR" id="A4U7A7"/>
<dbReference type="GlyCosmos" id="A4U7A7">
    <property type="glycosylation" value="1 site, No reported glycans"/>
</dbReference>
<dbReference type="Proteomes" id="UP000007556">
    <property type="component" value="Genome"/>
</dbReference>
<dbReference type="GO" id="GO:0020002">
    <property type="term" value="C:host cell plasma membrane"/>
    <property type="evidence" value="ECO:0007669"/>
    <property type="project" value="UniProtKB-SubCell"/>
</dbReference>
<dbReference type="GO" id="GO:0016020">
    <property type="term" value="C:membrane"/>
    <property type="evidence" value="ECO:0007669"/>
    <property type="project" value="UniProtKB-UniRule"/>
</dbReference>
<dbReference type="GO" id="GO:0055036">
    <property type="term" value="C:virion membrane"/>
    <property type="evidence" value="ECO:0007669"/>
    <property type="project" value="UniProtKB-SubCell"/>
</dbReference>
<dbReference type="GO" id="GO:0005216">
    <property type="term" value="F:monoatomic ion channel activity"/>
    <property type="evidence" value="ECO:0007669"/>
    <property type="project" value="UniProtKB-UniRule"/>
</dbReference>
<dbReference type="GO" id="GO:0015078">
    <property type="term" value="F:proton transmembrane transporter activity"/>
    <property type="evidence" value="ECO:0007669"/>
    <property type="project" value="UniProtKB-UniRule"/>
</dbReference>
<dbReference type="GO" id="GO:0051259">
    <property type="term" value="P:protein complex oligomerization"/>
    <property type="evidence" value="ECO:0007669"/>
    <property type="project" value="UniProtKB-UniRule"/>
</dbReference>
<dbReference type="GO" id="GO:0044694">
    <property type="term" value="P:symbiont genome entry into host cell via pore formation in plasma membrane"/>
    <property type="evidence" value="ECO:0007669"/>
    <property type="project" value="UniProtKB-UniRule"/>
</dbReference>
<dbReference type="GO" id="GO:0140321">
    <property type="term" value="P:symbiont-mediated suppression of host autophagy"/>
    <property type="evidence" value="ECO:0007669"/>
    <property type="project" value="UniProtKB-KW"/>
</dbReference>
<dbReference type="Gene3D" id="6.10.250.1640">
    <property type="match status" value="1"/>
</dbReference>
<dbReference type="HAMAP" id="MF_04069">
    <property type="entry name" value="INFV_M2"/>
    <property type="match status" value="1"/>
</dbReference>
<dbReference type="InterPro" id="IPR002089">
    <property type="entry name" value="Flu_M2"/>
</dbReference>
<dbReference type="Pfam" id="PF00599">
    <property type="entry name" value="Flu_M2"/>
    <property type="match status" value="1"/>
</dbReference>
<protein>
    <recommendedName>
        <fullName evidence="1">Matrix protein 2</fullName>
    </recommendedName>
    <alternativeName>
        <fullName evidence="1">Proton channel protein M2</fullName>
    </alternativeName>
</protein>
<gene>
    <name evidence="1" type="primary">M</name>
    <name type="synonym">M2</name>
</gene>